<comment type="function">
    <text evidence="1">Forms oxaloacetate, a four-carbon dicarboxylic acid source for the tricarboxylic acid cycle.</text>
</comment>
<comment type="catalytic activity">
    <reaction evidence="1">
        <text>oxaloacetate + phosphate = phosphoenolpyruvate + hydrogencarbonate</text>
        <dbReference type="Rhea" id="RHEA:28370"/>
        <dbReference type="ChEBI" id="CHEBI:16452"/>
        <dbReference type="ChEBI" id="CHEBI:17544"/>
        <dbReference type="ChEBI" id="CHEBI:43474"/>
        <dbReference type="ChEBI" id="CHEBI:58702"/>
        <dbReference type="EC" id="4.1.1.31"/>
    </reaction>
</comment>
<comment type="cofactor">
    <cofactor evidence="1">
        <name>Mg(2+)</name>
        <dbReference type="ChEBI" id="CHEBI:18420"/>
    </cofactor>
</comment>
<comment type="similarity">
    <text evidence="1">Belongs to the PEPCase type 1 family.</text>
</comment>
<dbReference type="EC" id="4.1.1.31" evidence="1"/>
<dbReference type="EMBL" id="CP000419">
    <property type="protein sequence ID" value="ABJ66013.1"/>
    <property type="molecule type" value="Genomic_DNA"/>
</dbReference>
<dbReference type="RefSeq" id="WP_011680994.1">
    <property type="nucleotide sequence ID" value="NC_008532.1"/>
</dbReference>
<dbReference type="SMR" id="Q03LA9"/>
<dbReference type="KEGG" id="ste:STER_0760"/>
<dbReference type="HOGENOM" id="CLU_006557_2_0_9"/>
<dbReference type="GO" id="GO:0005829">
    <property type="term" value="C:cytosol"/>
    <property type="evidence" value="ECO:0007669"/>
    <property type="project" value="TreeGrafter"/>
</dbReference>
<dbReference type="GO" id="GO:0000287">
    <property type="term" value="F:magnesium ion binding"/>
    <property type="evidence" value="ECO:0007669"/>
    <property type="project" value="UniProtKB-UniRule"/>
</dbReference>
<dbReference type="GO" id="GO:0008964">
    <property type="term" value="F:phosphoenolpyruvate carboxylase activity"/>
    <property type="evidence" value="ECO:0007669"/>
    <property type="project" value="UniProtKB-UniRule"/>
</dbReference>
<dbReference type="GO" id="GO:0015977">
    <property type="term" value="P:carbon fixation"/>
    <property type="evidence" value="ECO:0007669"/>
    <property type="project" value="UniProtKB-UniRule"/>
</dbReference>
<dbReference type="GO" id="GO:0006107">
    <property type="term" value="P:oxaloacetate metabolic process"/>
    <property type="evidence" value="ECO:0007669"/>
    <property type="project" value="UniProtKB-UniRule"/>
</dbReference>
<dbReference type="GO" id="GO:0006099">
    <property type="term" value="P:tricarboxylic acid cycle"/>
    <property type="evidence" value="ECO:0007669"/>
    <property type="project" value="InterPro"/>
</dbReference>
<dbReference type="Gene3D" id="1.20.1440.90">
    <property type="entry name" value="Phosphoenolpyruvate/pyruvate domain"/>
    <property type="match status" value="1"/>
</dbReference>
<dbReference type="HAMAP" id="MF_00595">
    <property type="entry name" value="PEPcase_type1"/>
    <property type="match status" value="1"/>
</dbReference>
<dbReference type="InterPro" id="IPR021135">
    <property type="entry name" value="PEP_COase"/>
</dbReference>
<dbReference type="InterPro" id="IPR022805">
    <property type="entry name" value="PEP_COase_bac/pln-type"/>
</dbReference>
<dbReference type="InterPro" id="IPR018129">
    <property type="entry name" value="PEP_COase_Lys_AS"/>
</dbReference>
<dbReference type="InterPro" id="IPR033129">
    <property type="entry name" value="PEPCASE_His_AS"/>
</dbReference>
<dbReference type="InterPro" id="IPR015813">
    <property type="entry name" value="Pyrv/PenolPyrv_kinase-like_dom"/>
</dbReference>
<dbReference type="NCBIfam" id="NF000584">
    <property type="entry name" value="PRK00009.1"/>
    <property type="match status" value="1"/>
</dbReference>
<dbReference type="PANTHER" id="PTHR30523">
    <property type="entry name" value="PHOSPHOENOLPYRUVATE CARBOXYLASE"/>
    <property type="match status" value="1"/>
</dbReference>
<dbReference type="PANTHER" id="PTHR30523:SF6">
    <property type="entry name" value="PHOSPHOENOLPYRUVATE CARBOXYLASE"/>
    <property type="match status" value="1"/>
</dbReference>
<dbReference type="Pfam" id="PF00311">
    <property type="entry name" value="PEPcase"/>
    <property type="match status" value="1"/>
</dbReference>
<dbReference type="PRINTS" id="PR00150">
    <property type="entry name" value="PEPCARBXLASE"/>
</dbReference>
<dbReference type="SUPFAM" id="SSF51621">
    <property type="entry name" value="Phosphoenolpyruvate/pyruvate domain"/>
    <property type="match status" value="1"/>
</dbReference>
<dbReference type="PROSITE" id="PS00781">
    <property type="entry name" value="PEPCASE_1"/>
    <property type="match status" value="1"/>
</dbReference>
<dbReference type="PROSITE" id="PS00393">
    <property type="entry name" value="PEPCASE_2"/>
    <property type="match status" value="1"/>
</dbReference>
<keyword id="KW-0120">Carbon dioxide fixation</keyword>
<keyword id="KW-0456">Lyase</keyword>
<keyword id="KW-0460">Magnesium</keyword>
<sequence length="940" mass="107012">MAFNKLESSNNQEIISEEVGILKELLDDATRGIAGEQGLTTIQHLVELYDEGDYEALTQAISEMTNDDMVVASRYFSLLPLLINISEDVDLAYEVNRKNNIDESYLGKLSETFDVVAESDNARDILENVNVVPVLTAHPTQVQRKTMLELTNHIHELLRKHRDVKDGLINKDKWYADLRRYVEIMMKTDIIREKKLKVKNEITNVMEYYNSSLIKAITKLSHEFKRLAVEKGIELDNPTPITMGMWIGGDRDGNPFVTAETLKLSATLQSEVILNYYIEKVDNLYRSFSLSSRLTEVSETVAEMAKLSPDTSVYRENEPYRRAFSYIQSKLIQTLLFFKAGNFSNERAAKRLSENVRLGSVSTGEVVADFVHDRLSQSLQAVSQQTTEFYETAEAFHDDLLAIKNSLLENDDSVLISGDFEELLQAVEVFGFYLATIDMRQDSSVHEACVAELLKSANIVDNYSELTEVEKVAVLLKELQEDPRTLSSTNVSKSETLEKELAIFRTARLLKDYLGEEVIKQHIISHTESVSDMFELAILLKEVGLVDTERARVQIVPLFETIEDLENSNEIMKQYLGYDIVKRWIKNSNNYQEIMLGYSDSNKDGGYLSSGWTLYKAQNELTKIGEERGIKITFFHGRGGTVGRGGGPSYDAITSQPFGTIKDRIRLTEQGEVIGNKYGNKDAAYYNLEMLVSATLDRMVTRQITDPDELVDFREIMDSIVQDSNGIYRDLVFGNEHFYDYFFEASPIKEVSSLNIGSRPAARKTITDISGLRAIPWVFSWSQNRIMLPGWYGVGSAFNHYIEAEEGNLEKLQHMFETWPFFRSLLSNVDMVLSKSDMNIAFHYAQLAESEEVRSVFNIILDEWQLTKNVILAIEKHDDFLEESPSLKASLGFRLPYFNVLNYIQIELIKRLRNNNLTDDEISLIHITINGIATGLRNSG</sequence>
<reference key="1">
    <citation type="journal article" date="2006" name="Proc. Natl. Acad. Sci. U.S.A.">
        <title>Comparative genomics of the lactic acid bacteria.</title>
        <authorList>
            <person name="Makarova K.S."/>
            <person name="Slesarev A."/>
            <person name="Wolf Y.I."/>
            <person name="Sorokin A."/>
            <person name="Mirkin B."/>
            <person name="Koonin E.V."/>
            <person name="Pavlov A."/>
            <person name="Pavlova N."/>
            <person name="Karamychev V."/>
            <person name="Polouchine N."/>
            <person name="Shakhova V."/>
            <person name="Grigoriev I."/>
            <person name="Lou Y."/>
            <person name="Rohksar D."/>
            <person name="Lucas S."/>
            <person name="Huang K."/>
            <person name="Goodstein D.M."/>
            <person name="Hawkins T."/>
            <person name="Plengvidhya V."/>
            <person name="Welker D."/>
            <person name="Hughes J."/>
            <person name="Goh Y."/>
            <person name="Benson A."/>
            <person name="Baldwin K."/>
            <person name="Lee J.-H."/>
            <person name="Diaz-Muniz I."/>
            <person name="Dosti B."/>
            <person name="Smeianov V."/>
            <person name="Wechter W."/>
            <person name="Barabote R."/>
            <person name="Lorca G."/>
            <person name="Altermann E."/>
            <person name="Barrangou R."/>
            <person name="Ganesan B."/>
            <person name="Xie Y."/>
            <person name="Rawsthorne H."/>
            <person name="Tamir D."/>
            <person name="Parker C."/>
            <person name="Breidt F."/>
            <person name="Broadbent J.R."/>
            <person name="Hutkins R."/>
            <person name="O'Sullivan D."/>
            <person name="Steele J."/>
            <person name="Unlu G."/>
            <person name="Saier M.H. Jr."/>
            <person name="Klaenhammer T."/>
            <person name="Richardson P."/>
            <person name="Kozyavkin S."/>
            <person name="Weimer B.C."/>
            <person name="Mills D.A."/>
        </authorList>
    </citation>
    <scope>NUCLEOTIDE SEQUENCE [LARGE SCALE GENOMIC DNA]</scope>
    <source>
        <strain>ATCC BAA-491 / LMD-9</strain>
    </source>
</reference>
<evidence type="ECO:0000255" key="1">
    <source>
        <dbReference type="HAMAP-Rule" id="MF_00595"/>
    </source>
</evidence>
<proteinExistence type="inferred from homology"/>
<accession>Q03LA9</accession>
<protein>
    <recommendedName>
        <fullName evidence="1">Phosphoenolpyruvate carboxylase</fullName>
        <shortName evidence="1">PEPC</shortName>
        <shortName evidence="1">PEPCase</shortName>
        <ecNumber evidence="1">4.1.1.31</ecNumber>
    </recommendedName>
</protein>
<feature type="chain" id="PRO_1000025598" description="Phosphoenolpyruvate carboxylase">
    <location>
        <begin position="1"/>
        <end position="940"/>
    </location>
</feature>
<feature type="active site" evidence="1">
    <location>
        <position position="138"/>
    </location>
</feature>
<feature type="active site" evidence="1">
    <location>
        <position position="603"/>
    </location>
</feature>
<name>CAPP_STRTD</name>
<gene>
    <name evidence="1" type="primary">ppc</name>
    <name type="ordered locus">STER_0760</name>
</gene>
<organism>
    <name type="scientific">Streptococcus thermophilus (strain ATCC BAA-491 / LMD-9)</name>
    <dbReference type="NCBI Taxonomy" id="322159"/>
    <lineage>
        <taxon>Bacteria</taxon>
        <taxon>Bacillati</taxon>
        <taxon>Bacillota</taxon>
        <taxon>Bacilli</taxon>
        <taxon>Lactobacillales</taxon>
        <taxon>Streptococcaceae</taxon>
        <taxon>Streptococcus</taxon>
    </lineage>
</organism>